<evidence type="ECO:0000255" key="1">
    <source>
        <dbReference type="HAMAP-Rule" id="MF_00373"/>
    </source>
</evidence>
<evidence type="ECO:0000305" key="2"/>
<gene>
    <name evidence="1" type="primary">rpmB</name>
    <name type="ordered locus">SPP_0472</name>
</gene>
<sequence length="62" mass="6884">MAKVCYFTGRKTVSGNNRSHAMNQTKRAVKPNLQKVTVLIDGKPKKVWASARALKSGKVERV</sequence>
<organism>
    <name type="scientific">Streptococcus pneumoniae (strain P1031)</name>
    <dbReference type="NCBI Taxonomy" id="488223"/>
    <lineage>
        <taxon>Bacteria</taxon>
        <taxon>Bacillati</taxon>
        <taxon>Bacillota</taxon>
        <taxon>Bacilli</taxon>
        <taxon>Lactobacillales</taxon>
        <taxon>Streptococcaceae</taxon>
        <taxon>Streptococcus</taxon>
    </lineage>
</organism>
<feature type="chain" id="PRO_1000195944" description="Large ribosomal subunit protein bL28">
    <location>
        <begin position="1"/>
        <end position="62"/>
    </location>
</feature>
<protein>
    <recommendedName>
        <fullName evidence="1">Large ribosomal subunit protein bL28</fullName>
    </recommendedName>
    <alternativeName>
        <fullName evidence="2">50S ribosomal protein L28</fullName>
    </alternativeName>
</protein>
<reference key="1">
    <citation type="journal article" date="2010" name="Genome Biol.">
        <title>Structure and dynamics of the pan-genome of Streptococcus pneumoniae and closely related species.</title>
        <authorList>
            <person name="Donati C."/>
            <person name="Hiller N.L."/>
            <person name="Tettelin H."/>
            <person name="Muzzi A."/>
            <person name="Croucher N.J."/>
            <person name="Angiuoli S.V."/>
            <person name="Oggioni M."/>
            <person name="Dunning Hotopp J.C."/>
            <person name="Hu F.Z."/>
            <person name="Riley D.R."/>
            <person name="Covacci A."/>
            <person name="Mitchell T.J."/>
            <person name="Bentley S.D."/>
            <person name="Kilian M."/>
            <person name="Ehrlich G.D."/>
            <person name="Rappuoli R."/>
            <person name="Moxon E.R."/>
            <person name="Masignani V."/>
        </authorList>
    </citation>
    <scope>NUCLEOTIDE SEQUENCE [LARGE SCALE GENOMIC DNA]</scope>
    <source>
        <strain>P1031</strain>
    </source>
</reference>
<name>RL28_STRZP</name>
<dbReference type="EMBL" id="CP000920">
    <property type="protein sequence ID" value="ACO20974.1"/>
    <property type="molecule type" value="Genomic_DNA"/>
</dbReference>
<dbReference type="RefSeq" id="WP_001140948.1">
    <property type="nucleotide sequence ID" value="NC_012467.1"/>
</dbReference>
<dbReference type="SMR" id="C1CIU2"/>
<dbReference type="GeneID" id="93921138"/>
<dbReference type="KEGG" id="spp:SPP_0472"/>
<dbReference type="HOGENOM" id="CLU_064548_7_1_9"/>
<dbReference type="GO" id="GO:1990904">
    <property type="term" value="C:ribonucleoprotein complex"/>
    <property type="evidence" value="ECO:0007669"/>
    <property type="project" value="UniProtKB-KW"/>
</dbReference>
<dbReference type="GO" id="GO:0005840">
    <property type="term" value="C:ribosome"/>
    <property type="evidence" value="ECO:0007669"/>
    <property type="project" value="UniProtKB-KW"/>
</dbReference>
<dbReference type="GO" id="GO:0003735">
    <property type="term" value="F:structural constituent of ribosome"/>
    <property type="evidence" value="ECO:0007669"/>
    <property type="project" value="InterPro"/>
</dbReference>
<dbReference type="GO" id="GO:0006412">
    <property type="term" value="P:translation"/>
    <property type="evidence" value="ECO:0007669"/>
    <property type="project" value="UniProtKB-UniRule"/>
</dbReference>
<dbReference type="Gene3D" id="2.30.170.40">
    <property type="entry name" value="Ribosomal protein L28/L24"/>
    <property type="match status" value="1"/>
</dbReference>
<dbReference type="HAMAP" id="MF_00373">
    <property type="entry name" value="Ribosomal_bL28"/>
    <property type="match status" value="1"/>
</dbReference>
<dbReference type="InterPro" id="IPR050096">
    <property type="entry name" value="Bacterial_rp_bL28"/>
</dbReference>
<dbReference type="InterPro" id="IPR026569">
    <property type="entry name" value="Ribosomal_bL28"/>
</dbReference>
<dbReference type="InterPro" id="IPR034704">
    <property type="entry name" value="Ribosomal_bL28/bL31-like_sf"/>
</dbReference>
<dbReference type="InterPro" id="IPR001383">
    <property type="entry name" value="Ribosomal_bL28_bact-type"/>
</dbReference>
<dbReference type="InterPro" id="IPR037147">
    <property type="entry name" value="Ribosomal_bL28_sf"/>
</dbReference>
<dbReference type="NCBIfam" id="TIGR00009">
    <property type="entry name" value="L28"/>
    <property type="match status" value="1"/>
</dbReference>
<dbReference type="PANTHER" id="PTHR39080">
    <property type="entry name" value="50S RIBOSOMAL PROTEIN L28"/>
    <property type="match status" value="1"/>
</dbReference>
<dbReference type="PANTHER" id="PTHR39080:SF1">
    <property type="entry name" value="LARGE RIBOSOMAL SUBUNIT PROTEIN BL28A"/>
    <property type="match status" value="1"/>
</dbReference>
<dbReference type="Pfam" id="PF00830">
    <property type="entry name" value="Ribosomal_L28"/>
    <property type="match status" value="1"/>
</dbReference>
<dbReference type="SUPFAM" id="SSF143800">
    <property type="entry name" value="L28p-like"/>
    <property type="match status" value="1"/>
</dbReference>
<comment type="similarity">
    <text evidence="1">Belongs to the bacterial ribosomal protein bL28 family.</text>
</comment>
<proteinExistence type="inferred from homology"/>
<keyword id="KW-0687">Ribonucleoprotein</keyword>
<keyword id="KW-0689">Ribosomal protein</keyword>
<accession>C1CIU2</accession>